<evidence type="ECO:0000255" key="1">
    <source>
        <dbReference type="HAMAP-Rule" id="MF_00621"/>
    </source>
</evidence>
<gene>
    <name evidence="1" type="primary">codY</name>
    <name type="ordered locus">ABC2273</name>
</gene>
<feature type="chain" id="PRO_0000213220" description="Global transcriptional regulator CodY">
    <location>
        <begin position="1"/>
        <end position="259"/>
    </location>
</feature>
<feature type="DNA-binding region" description="H-T-H motif" evidence="1">
    <location>
        <begin position="203"/>
        <end position="222"/>
    </location>
</feature>
<feature type="region of interest" description="GAF domain" evidence="1">
    <location>
        <begin position="1"/>
        <end position="155"/>
    </location>
</feature>
<feature type="modified residue" description="Phosphoserine" evidence="1">
    <location>
        <position position="215"/>
    </location>
</feature>
<name>CODY_SHOC1</name>
<keyword id="KW-0963">Cytoplasm</keyword>
<keyword id="KW-0238">DNA-binding</keyword>
<keyword id="KW-0597">Phosphoprotein</keyword>
<keyword id="KW-1185">Reference proteome</keyword>
<keyword id="KW-0678">Repressor</keyword>
<keyword id="KW-0804">Transcription</keyword>
<keyword id="KW-0805">Transcription regulation</keyword>
<reference key="1">
    <citation type="submission" date="2003-10" db="EMBL/GenBank/DDBJ databases">
        <title>The complete genome sequence of the alkaliphilic Bacillus clausii KSM-K16.</title>
        <authorList>
            <person name="Takaki Y."/>
            <person name="Kageyama Y."/>
            <person name="Shimamura S."/>
            <person name="Suzuki H."/>
            <person name="Nishi S."/>
            <person name="Hatada Y."/>
            <person name="Kawai S."/>
            <person name="Ito S."/>
            <person name="Horikoshi K."/>
        </authorList>
    </citation>
    <scope>NUCLEOTIDE SEQUENCE [LARGE SCALE GENOMIC DNA]</scope>
    <source>
        <strain>KSM-K16</strain>
    </source>
</reference>
<sequence length="259" mass="29285">MDLLTRTRKINEMLQKTSGQHVNFREMAMTLREAIGSNVFVVSRRGKLLGFSIEEEIENDRMKKMLDERQFPEEYTDGLFKIEDTSANIDVDSEYTAFPVENRDIFKNGLTTIVPIKGGGQRLGTLILSRLNRSFSDDDLILAEYGATVVGMEILHEKTQEIEEEARSKAVVQMAISSLSYSELEAVEHIFEELDGREGLLVASKIADRVGITRSVIVNALRKLESAGVIESRSLGMKGTYIKVLNDKFLLELERMKED</sequence>
<comment type="function">
    <text evidence="1">DNA-binding global transcriptional regulator which is involved in the adaptive response to starvation and acts by directly or indirectly controlling the expression of numerous genes in response to nutrient availability. During rapid exponential growth, CodY is highly active and represses genes whose products allow adaptation to nutrient depletion.</text>
</comment>
<comment type="subcellular location">
    <subcellularLocation>
        <location evidence="1">Cytoplasm</location>
    </subcellularLocation>
</comment>
<comment type="similarity">
    <text evidence="1">Belongs to the CodY family.</text>
</comment>
<accession>Q5WFQ2</accession>
<protein>
    <recommendedName>
        <fullName evidence="1">Global transcriptional regulator CodY</fullName>
    </recommendedName>
</protein>
<dbReference type="EMBL" id="AP006627">
    <property type="protein sequence ID" value="BAD64808.1"/>
    <property type="molecule type" value="Genomic_DNA"/>
</dbReference>
<dbReference type="RefSeq" id="WP_011247116.1">
    <property type="nucleotide sequence ID" value="NC_006582.1"/>
</dbReference>
<dbReference type="SMR" id="Q5WFQ2"/>
<dbReference type="STRING" id="66692.ABC2273"/>
<dbReference type="GeneID" id="86926423"/>
<dbReference type="KEGG" id="bcl:ABC2273"/>
<dbReference type="eggNOG" id="COG4465">
    <property type="taxonomic scope" value="Bacteria"/>
</dbReference>
<dbReference type="HOGENOM" id="CLU_089581_0_0_9"/>
<dbReference type="OrthoDB" id="2056at2"/>
<dbReference type="Proteomes" id="UP000001168">
    <property type="component" value="Chromosome"/>
</dbReference>
<dbReference type="GO" id="GO:0005737">
    <property type="term" value="C:cytoplasm"/>
    <property type="evidence" value="ECO:0007669"/>
    <property type="project" value="UniProtKB-SubCell"/>
</dbReference>
<dbReference type="GO" id="GO:0003677">
    <property type="term" value="F:DNA binding"/>
    <property type="evidence" value="ECO:0007669"/>
    <property type="project" value="UniProtKB-UniRule"/>
</dbReference>
<dbReference type="GO" id="GO:0003700">
    <property type="term" value="F:DNA-binding transcription factor activity"/>
    <property type="evidence" value="ECO:0007669"/>
    <property type="project" value="InterPro"/>
</dbReference>
<dbReference type="GO" id="GO:0005525">
    <property type="term" value="F:GTP binding"/>
    <property type="evidence" value="ECO:0007669"/>
    <property type="project" value="InterPro"/>
</dbReference>
<dbReference type="GO" id="GO:0045892">
    <property type="term" value="P:negative regulation of DNA-templated transcription"/>
    <property type="evidence" value="ECO:0007669"/>
    <property type="project" value="UniProtKB-UniRule"/>
</dbReference>
<dbReference type="FunFam" id="1.10.10.10:FF:000034">
    <property type="entry name" value="GTP-sensing transcriptional pleiotropic repressor CodY"/>
    <property type="match status" value="1"/>
</dbReference>
<dbReference type="FunFam" id="3.30.450.40:FF:000003">
    <property type="entry name" value="GTP-sensing transcriptional pleiotropic repressor CodY"/>
    <property type="match status" value="1"/>
</dbReference>
<dbReference type="Gene3D" id="3.30.450.40">
    <property type="match status" value="1"/>
</dbReference>
<dbReference type="Gene3D" id="1.10.10.10">
    <property type="entry name" value="Winged helix-like DNA-binding domain superfamily/Winged helix DNA-binding domain"/>
    <property type="match status" value="1"/>
</dbReference>
<dbReference type="HAMAP" id="MF_00621">
    <property type="entry name" value="HTH_type_CodY"/>
    <property type="match status" value="1"/>
</dbReference>
<dbReference type="InterPro" id="IPR014154">
    <property type="entry name" value="CodY"/>
</dbReference>
<dbReference type="InterPro" id="IPR029016">
    <property type="entry name" value="GAF-like_dom_sf"/>
</dbReference>
<dbReference type="InterPro" id="IPR013198">
    <property type="entry name" value="GTP_trans_reg_CodY_C"/>
</dbReference>
<dbReference type="InterPro" id="IPR010312">
    <property type="entry name" value="Transc_reg_CodY_N"/>
</dbReference>
<dbReference type="InterPro" id="IPR036388">
    <property type="entry name" value="WH-like_DNA-bd_sf"/>
</dbReference>
<dbReference type="InterPro" id="IPR036390">
    <property type="entry name" value="WH_DNA-bd_sf"/>
</dbReference>
<dbReference type="NCBIfam" id="TIGR02787">
    <property type="entry name" value="codY_Gpos"/>
    <property type="match status" value="1"/>
</dbReference>
<dbReference type="NCBIfam" id="NF003170">
    <property type="entry name" value="PRK04158.1"/>
    <property type="match status" value="1"/>
</dbReference>
<dbReference type="PANTHER" id="PTHR40062:SF1">
    <property type="entry name" value="GLOBAL TRANSCRIPTIONAL REGULATOR CODY"/>
    <property type="match status" value="1"/>
</dbReference>
<dbReference type="PANTHER" id="PTHR40062">
    <property type="entry name" value="GTP-SENSING TRANSCRIPTIONAL PLEIOTROPIC REPRESSOR CODY"/>
    <property type="match status" value="1"/>
</dbReference>
<dbReference type="Pfam" id="PF06018">
    <property type="entry name" value="CodY"/>
    <property type="match status" value="1"/>
</dbReference>
<dbReference type="Pfam" id="PF08222">
    <property type="entry name" value="HTH_CodY"/>
    <property type="match status" value="1"/>
</dbReference>
<dbReference type="PIRSF" id="PIRSF011572">
    <property type="entry name" value="GTP_sensing_CodY"/>
    <property type="match status" value="1"/>
</dbReference>
<dbReference type="SUPFAM" id="SSF46785">
    <property type="entry name" value="Winged helix' DNA-binding domain"/>
    <property type="match status" value="1"/>
</dbReference>
<proteinExistence type="inferred from homology"/>
<organism>
    <name type="scientific">Shouchella clausii (strain KSM-K16)</name>
    <name type="common">Alkalihalobacillus clausii</name>
    <dbReference type="NCBI Taxonomy" id="66692"/>
    <lineage>
        <taxon>Bacteria</taxon>
        <taxon>Bacillati</taxon>
        <taxon>Bacillota</taxon>
        <taxon>Bacilli</taxon>
        <taxon>Bacillales</taxon>
        <taxon>Bacillaceae</taxon>
        <taxon>Shouchella</taxon>
    </lineage>
</organism>